<feature type="chain" id="PRO_1000141291" description="Small ribosomal subunit protein uS13">
    <location>
        <begin position="1"/>
        <end position="123"/>
    </location>
</feature>
<feature type="region of interest" description="Disordered" evidence="2">
    <location>
        <begin position="94"/>
        <end position="123"/>
    </location>
</feature>
<feature type="compositionally biased region" description="Basic residues" evidence="2">
    <location>
        <begin position="106"/>
        <end position="123"/>
    </location>
</feature>
<name>RS13_MYCAP</name>
<reference key="1">
    <citation type="journal article" date="2007" name="PLoS Genet.">
        <title>Being pathogenic, plastic, and sexual while living with a nearly minimal bacterial genome.</title>
        <authorList>
            <person name="Sirand-Pugnet P."/>
            <person name="Lartigue C."/>
            <person name="Marenda M."/>
            <person name="Jacob D."/>
            <person name="Barre A."/>
            <person name="Barbe V."/>
            <person name="Schenowitz C."/>
            <person name="Mangenot S."/>
            <person name="Couloux A."/>
            <person name="Segurens B."/>
            <person name="de Daruvar A."/>
            <person name="Blanchard A."/>
            <person name="Citti C."/>
        </authorList>
    </citation>
    <scope>NUCLEOTIDE SEQUENCE [LARGE SCALE GENOMIC DNA]</scope>
    <source>
        <strain>NCTC 10123 / CIP 59.7 / PG2</strain>
    </source>
</reference>
<organism>
    <name type="scientific">Mycoplasmopsis agalactiae (strain NCTC 10123 / CIP 59.7 / PG2)</name>
    <name type="common">Mycoplasma agalactiae</name>
    <dbReference type="NCBI Taxonomy" id="347257"/>
    <lineage>
        <taxon>Bacteria</taxon>
        <taxon>Bacillati</taxon>
        <taxon>Mycoplasmatota</taxon>
        <taxon>Mycoplasmoidales</taxon>
        <taxon>Metamycoplasmataceae</taxon>
        <taxon>Mycoplasmopsis</taxon>
    </lineage>
</organism>
<accession>A5IYW1</accession>
<keyword id="KW-1185">Reference proteome</keyword>
<keyword id="KW-0687">Ribonucleoprotein</keyword>
<keyword id="KW-0689">Ribosomal protein</keyword>
<keyword id="KW-0694">RNA-binding</keyword>
<keyword id="KW-0699">rRNA-binding</keyword>
<keyword id="KW-0820">tRNA-binding</keyword>
<protein>
    <recommendedName>
        <fullName evidence="1">Small ribosomal subunit protein uS13</fullName>
    </recommendedName>
    <alternativeName>
        <fullName evidence="3">30S ribosomal protein S13</fullName>
    </alternativeName>
</protein>
<gene>
    <name evidence="1" type="primary">rpsM</name>
    <name type="ordered locus">MAG5220</name>
</gene>
<proteinExistence type="inferred from homology"/>
<sequence>MARILNIEIPNNKRVVISLTYIYGIGRTSAQEICAKAKIDENIRVKDLSEAQLSAIREIAKEYVTEGDLRREVSLNIKRLMEVKCYRGIRHRKGLPVRGQSTKSNARTRKGPRKTVAGKKSTK</sequence>
<dbReference type="EMBL" id="CU179680">
    <property type="protein sequence ID" value="CAL59220.1"/>
    <property type="molecule type" value="Genomic_DNA"/>
</dbReference>
<dbReference type="RefSeq" id="WP_004023934.1">
    <property type="nucleotide sequence ID" value="NC_009497.1"/>
</dbReference>
<dbReference type="SMR" id="A5IYW1"/>
<dbReference type="STRING" id="347257.MAG5220"/>
<dbReference type="GeneID" id="93358261"/>
<dbReference type="KEGG" id="maa:MAG5220"/>
<dbReference type="HOGENOM" id="CLU_103849_1_2_14"/>
<dbReference type="Proteomes" id="UP000007065">
    <property type="component" value="Chromosome"/>
</dbReference>
<dbReference type="GO" id="GO:0005829">
    <property type="term" value="C:cytosol"/>
    <property type="evidence" value="ECO:0007669"/>
    <property type="project" value="TreeGrafter"/>
</dbReference>
<dbReference type="GO" id="GO:0015935">
    <property type="term" value="C:small ribosomal subunit"/>
    <property type="evidence" value="ECO:0007669"/>
    <property type="project" value="TreeGrafter"/>
</dbReference>
<dbReference type="GO" id="GO:0019843">
    <property type="term" value="F:rRNA binding"/>
    <property type="evidence" value="ECO:0007669"/>
    <property type="project" value="UniProtKB-UniRule"/>
</dbReference>
<dbReference type="GO" id="GO:0003735">
    <property type="term" value="F:structural constituent of ribosome"/>
    <property type="evidence" value="ECO:0007669"/>
    <property type="project" value="InterPro"/>
</dbReference>
<dbReference type="GO" id="GO:0000049">
    <property type="term" value="F:tRNA binding"/>
    <property type="evidence" value="ECO:0007669"/>
    <property type="project" value="UniProtKB-UniRule"/>
</dbReference>
<dbReference type="GO" id="GO:0006412">
    <property type="term" value="P:translation"/>
    <property type="evidence" value="ECO:0007669"/>
    <property type="project" value="UniProtKB-UniRule"/>
</dbReference>
<dbReference type="FunFam" id="1.10.8.50:FF:000001">
    <property type="entry name" value="30S ribosomal protein S13"/>
    <property type="match status" value="1"/>
</dbReference>
<dbReference type="FunFam" id="4.10.910.10:FF:000001">
    <property type="entry name" value="30S ribosomal protein S13"/>
    <property type="match status" value="1"/>
</dbReference>
<dbReference type="Gene3D" id="1.10.8.50">
    <property type="match status" value="1"/>
</dbReference>
<dbReference type="Gene3D" id="4.10.910.10">
    <property type="entry name" value="30s ribosomal protein s13, domain 2"/>
    <property type="match status" value="1"/>
</dbReference>
<dbReference type="HAMAP" id="MF_01315">
    <property type="entry name" value="Ribosomal_uS13"/>
    <property type="match status" value="1"/>
</dbReference>
<dbReference type="InterPro" id="IPR027437">
    <property type="entry name" value="Rbsml_uS13_C"/>
</dbReference>
<dbReference type="InterPro" id="IPR001892">
    <property type="entry name" value="Ribosomal_uS13"/>
</dbReference>
<dbReference type="InterPro" id="IPR010979">
    <property type="entry name" value="Ribosomal_uS13-like_H2TH"/>
</dbReference>
<dbReference type="InterPro" id="IPR019980">
    <property type="entry name" value="Ribosomal_uS13_bac-type"/>
</dbReference>
<dbReference type="InterPro" id="IPR018269">
    <property type="entry name" value="Ribosomal_uS13_CS"/>
</dbReference>
<dbReference type="NCBIfam" id="TIGR03631">
    <property type="entry name" value="uS13_bact"/>
    <property type="match status" value="1"/>
</dbReference>
<dbReference type="PANTHER" id="PTHR10871">
    <property type="entry name" value="30S RIBOSOMAL PROTEIN S13/40S RIBOSOMAL PROTEIN S18"/>
    <property type="match status" value="1"/>
</dbReference>
<dbReference type="PANTHER" id="PTHR10871:SF1">
    <property type="entry name" value="SMALL RIBOSOMAL SUBUNIT PROTEIN US13M"/>
    <property type="match status" value="1"/>
</dbReference>
<dbReference type="Pfam" id="PF00416">
    <property type="entry name" value="Ribosomal_S13"/>
    <property type="match status" value="1"/>
</dbReference>
<dbReference type="PIRSF" id="PIRSF002134">
    <property type="entry name" value="Ribosomal_S13"/>
    <property type="match status" value="1"/>
</dbReference>
<dbReference type="SUPFAM" id="SSF46946">
    <property type="entry name" value="S13-like H2TH domain"/>
    <property type="match status" value="1"/>
</dbReference>
<dbReference type="PROSITE" id="PS00646">
    <property type="entry name" value="RIBOSOMAL_S13_1"/>
    <property type="match status" value="1"/>
</dbReference>
<dbReference type="PROSITE" id="PS50159">
    <property type="entry name" value="RIBOSOMAL_S13_2"/>
    <property type="match status" value="1"/>
</dbReference>
<comment type="function">
    <text evidence="1">Located at the top of the head of the 30S subunit, it contacts several helices of the 16S rRNA. In the 70S ribosome it contacts the 23S rRNA (bridge B1a) and protein L5 of the 50S subunit (bridge B1b), connecting the 2 subunits; these bridges are implicated in subunit movement. Contacts the tRNAs in the A and P-sites.</text>
</comment>
<comment type="subunit">
    <text evidence="1">Part of the 30S ribosomal subunit. Forms a loose heterodimer with protein S19. Forms two bridges to the 50S subunit in the 70S ribosome.</text>
</comment>
<comment type="similarity">
    <text evidence="1">Belongs to the universal ribosomal protein uS13 family.</text>
</comment>
<evidence type="ECO:0000255" key="1">
    <source>
        <dbReference type="HAMAP-Rule" id="MF_01315"/>
    </source>
</evidence>
<evidence type="ECO:0000256" key="2">
    <source>
        <dbReference type="SAM" id="MobiDB-lite"/>
    </source>
</evidence>
<evidence type="ECO:0000305" key="3"/>